<protein>
    <recommendedName>
        <fullName evidence="1">Protein translocase subunit SecA 2</fullName>
        <ecNumber evidence="1">7.4.2.8</ecNumber>
    </recommendedName>
</protein>
<proteinExistence type="inferred from homology"/>
<dbReference type="EC" id="7.4.2.8" evidence="1"/>
<dbReference type="EMBL" id="AP006716">
    <property type="protein sequence ID" value="BAE03640.1"/>
    <property type="molecule type" value="Genomic_DNA"/>
</dbReference>
<dbReference type="RefSeq" id="WP_011274659.1">
    <property type="nucleotide sequence ID" value="NC_007168.1"/>
</dbReference>
<dbReference type="SMR" id="Q4L9N5"/>
<dbReference type="KEGG" id="sha:SH0331"/>
<dbReference type="eggNOG" id="COG0653">
    <property type="taxonomic scope" value="Bacteria"/>
</dbReference>
<dbReference type="HOGENOM" id="CLU_005314_3_2_9"/>
<dbReference type="OrthoDB" id="9762243at2"/>
<dbReference type="Proteomes" id="UP000000543">
    <property type="component" value="Chromosome"/>
</dbReference>
<dbReference type="GO" id="GO:0031522">
    <property type="term" value="C:cell envelope Sec protein transport complex"/>
    <property type="evidence" value="ECO:0007669"/>
    <property type="project" value="TreeGrafter"/>
</dbReference>
<dbReference type="GO" id="GO:0005829">
    <property type="term" value="C:cytosol"/>
    <property type="evidence" value="ECO:0007669"/>
    <property type="project" value="TreeGrafter"/>
</dbReference>
<dbReference type="GO" id="GO:0005886">
    <property type="term" value="C:plasma membrane"/>
    <property type="evidence" value="ECO:0007669"/>
    <property type="project" value="UniProtKB-SubCell"/>
</dbReference>
<dbReference type="GO" id="GO:0005524">
    <property type="term" value="F:ATP binding"/>
    <property type="evidence" value="ECO:0007669"/>
    <property type="project" value="UniProtKB-UniRule"/>
</dbReference>
<dbReference type="GO" id="GO:0008564">
    <property type="term" value="F:protein-exporting ATPase activity"/>
    <property type="evidence" value="ECO:0007669"/>
    <property type="project" value="UniProtKB-EC"/>
</dbReference>
<dbReference type="GO" id="GO:0065002">
    <property type="term" value="P:intracellular protein transmembrane transport"/>
    <property type="evidence" value="ECO:0007669"/>
    <property type="project" value="UniProtKB-UniRule"/>
</dbReference>
<dbReference type="GO" id="GO:0017038">
    <property type="term" value="P:protein import"/>
    <property type="evidence" value="ECO:0007669"/>
    <property type="project" value="InterPro"/>
</dbReference>
<dbReference type="GO" id="GO:0006605">
    <property type="term" value="P:protein targeting"/>
    <property type="evidence" value="ECO:0007669"/>
    <property type="project" value="UniProtKB-UniRule"/>
</dbReference>
<dbReference type="GO" id="GO:0043952">
    <property type="term" value="P:protein transport by the Sec complex"/>
    <property type="evidence" value="ECO:0007669"/>
    <property type="project" value="TreeGrafter"/>
</dbReference>
<dbReference type="CDD" id="cd17928">
    <property type="entry name" value="DEXDc_SecA"/>
    <property type="match status" value="1"/>
</dbReference>
<dbReference type="CDD" id="cd18803">
    <property type="entry name" value="SF2_C_secA"/>
    <property type="match status" value="1"/>
</dbReference>
<dbReference type="FunFam" id="3.40.50.300:FF:000429">
    <property type="entry name" value="Preprotein translocase subunit SecA"/>
    <property type="match status" value="1"/>
</dbReference>
<dbReference type="Gene3D" id="1.10.3060.10">
    <property type="entry name" value="Helical scaffold and wing domains of SecA"/>
    <property type="match status" value="1"/>
</dbReference>
<dbReference type="Gene3D" id="3.40.50.300">
    <property type="entry name" value="P-loop containing nucleotide triphosphate hydrolases"/>
    <property type="match status" value="2"/>
</dbReference>
<dbReference type="Gene3D" id="3.90.1440.10">
    <property type="entry name" value="SecA, preprotein cross-linking domain"/>
    <property type="match status" value="1"/>
</dbReference>
<dbReference type="HAMAP" id="MF_01382">
    <property type="entry name" value="SecA"/>
    <property type="match status" value="1"/>
</dbReference>
<dbReference type="InterPro" id="IPR014001">
    <property type="entry name" value="Helicase_ATP-bd"/>
</dbReference>
<dbReference type="InterPro" id="IPR001650">
    <property type="entry name" value="Helicase_C-like"/>
</dbReference>
<dbReference type="InterPro" id="IPR027417">
    <property type="entry name" value="P-loop_NTPase"/>
</dbReference>
<dbReference type="InterPro" id="IPR000185">
    <property type="entry name" value="SecA"/>
</dbReference>
<dbReference type="InterPro" id="IPR022490">
    <property type="entry name" value="SecA2"/>
</dbReference>
<dbReference type="InterPro" id="IPR011115">
    <property type="entry name" value="SecA_DEAD"/>
</dbReference>
<dbReference type="InterPro" id="IPR014018">
    <property type="entry name" value="SecA_motor_DEAD"/>
</dbReference>
<dbReference type="InterPro" id="IPR011130">
    <property type="entry name" value="SecA_preprotein_X-link_dom"/>
</dbReference>
<dbReference type="InterPro" id="IPR044722">
    <property type="entry name" value="SecA_SF2_C"/>
</dbReference>
<dbReference type="InterPro" id="IPR011116">
    <property type="entry name" value="SecA_Wing/Scaffold"/>
</dbReference>
<dbReference type="InterPro" id="IPR036266">
    <property type="entry name" value="SecA_Wing/Scaffold_sf"/>
</dbReference>
<dbReference type="InterPro" id="IPR036670">
    <property type="entry name" value="SecA_X-link_sf"/>
</dbReference>
<dbReference type="NCBIfam" id="NF006630">
    <property type="entry name" value="PRK09200.1"/>
    <property type="match status" value="1"/>
</dbReference>
<dbReference type="NCBIfam" id="TIGR03714">
    <property type="entry name" value="secA2"/>
    <property type="match status" value="1"/>
</dbReference>
<dbReference type="PANTHER" id="PTHR30612:SF0">
    <property type="entry name" value="CHLOROPLAST PROTEIN-TRANSPORTING ATPASE"/>
    <property type="match status" value="1"/>
</dbReference>
<dbReference type="PANTHER" id="PTHR30612">
    <property type="entry name" value="SECA INNER MEMBRANE COMPONENT OF SEC PROTEIN SECRETION SYSTEM"/>
    <property type="match status" value="1"/>
</dbReference>
<dbReference type="Pfam" id="PF21090">
    <property type="entry name" value="P-loop_SecA"/>
    <property type="match status" value="2"/>
</dbReference>
<dbReference type="Pfam" id="PF07517">
    <property type="entry name" value="SecA_DEAD"/>
    <property type="match status" value="1"/>
</dbReference>
<dbReference type="Pfam" id="PF01043">
    <property type="entry name" value="SecA_PP_bind"/>
    <property type="match status" value="1"/>
</dbReference>
<dbReference type="Pfam" id="PF07516">
    <property type="entry name" value="SecA_SW"/>
    <property type="match status" value="1"/>
</dbReference>
<dbReference type="PRINTS" id="PR00906">
    <property type="entry name" value="SECA"/>
</dbReference>
<dbReference type="SMART" id="SM00957">
    <property type="entry name" value="SecA_DEAD"/>
    <property type="match status" value="1"/>
</dbReference>
<dbReference type="SMART" id="SM00958">
    <property type="entry name" value="SecA_PP_bind"/>
    <property type="match status" value="1"/>
</dbReference>
<dbReference type="SUPFAM" id="SSF81886">
    <property type="entry name" value="Helical scaffold and wing domains of SecA"/>
    <property type="match status" value="1"/>
</dbReference>
<dbReference type="SUPFAM" id="SSF52540">
    <property type="entry name" value="P-loop containing nucleoside triphosphate hydrolases"/>
    <property type="match status" value="2"/>
</dbReference>
<dbReference type="SUPFAM" id="SSF81767">
    <property type="entry name" value="Pre-protein crosslinking domain of SecA"/>
    <property type="match status" value="1"/>
</dbReference>
<dbReference type="PROSITE" id="PS51196">
    <property type="entry name" value="SECA_MOTOR_DEAD"/>
    <property type="match status" value="1"/>
</dbReference>
<evidence type="ECO:0000255" key="1">
    <source>
        <dbReference type="HAMAP-Rule" id="MF_01382"/>
    </source>
</evidence>
<feature type="chain" id="PRO_0000318434" description="Protein translocase subunit SecA 2">
    <location>
        <begin position="1"/>
        <end position="796"/>
    </location>
</feature>
<feature type="binding site" evidence="1">
    <location>
        <position position="84"/>
    </location>
    <ligand>
        <name>ATP</name>
        <dbReference type="ChEBI" id="CHEBI:30616"/>
    </ligand>
</feature>
<feature type="binding site" evidence="1">
    <location>
        <begin position="102"/>
        <end position="106"/>
    </location>
    <ligand>
        <name>ATP</name>
        <dbReference type="ChEBI" id="CHEBI:30616"/>
    </ligand>
</feature>
<feature type="binding site" evidence="1">
    <location>
        <position position="496"/>
    </location>
    <ligand>
        <name>ATP</name>
        <dbReference type="ChEBI" id="CHEBI:30616"/>
    </ligand>
</feature>
<reference key="1">
    <citation type="journal article" date="2005" name="J. Bacteriol.">
        <title>Whole-genome sequencing of Staphylococcus haemolyticus uncovers the extreme plasticity of its genome and the evolution of human-colonizing staphylococcal species.</title>
        <authorList>
            <person name="Takeuchi F."/>
            <person name="Watanabe S."/>
            <person name="Baba T."/>
            <person name="Yuzawa H."/>
            <person name="Ito T."/>
            <person name="Morimoto Y."/>
            <person name="Kuroda M."/>
            <person name="Cui L."/>
            <person name="Takahashi M."/>
            <person name="Ankai A."/>
            <person name="Baba S."/>
            <person name="Fukui S."/>
            <person name="Lee J.C."/>
            <person name="Hiramatsu K."/>
        </authorList>
    </citation>
    <scope>NUCLEOTIDE SEQUENCE [LARGE SCALE GENOMIC DNA]</scope>
    <source>
        <strain>JCSC1435</strain>
    </source>
</reference>
<gene>
    <name evidence="1" type="primary">secA2</name>
    <name type="ordered locus">SH0331</name>
</gene>
<keyword id="KW-0067">ATP-binding</keyword>
<keyword id="KW-1003">Cell membrane</keyword>
<keyword id="KW-0963">Cytoplasm</keyword>
<keyword id="KW-0472">Membrane</keyword>
<keyword id="KW-0547">Nucleotide-binding</keyword>
<keyword id="KW-0653">Protein transport</keyword>
<keyword id="KW-1278">Translocase</keyword>
<keyword id="KW-0811">Translocation</keyword>
<keyword id="KW-0813">Transport</keyword>
<name>SECA2_STAHJ</name>
<comment type="function">
    <text evidence="1">Part of the Sec protein translocase complex. Interacts with the SecYEG preprotein conducting channel. Has a central role in coupling the hydrolysis of ATP to the transfer of proteins into and across the cell membrane, serving as an ATP-driven molecular motor driving the stepwise translocation of polypeptide chains across the membrane.</text>
</comment>
<comment type="catalytic activity">
    <reaction evidence="1">
        <text>ATP + H2O + cellular proteinSide 1 = ADP + phosphate + cellular proteinSide 2.</text>
        <dbReference type="EC" id="7.4.2.8"/>
    </reaction>
</comment>
<comment type="subunit">
    <text evidence="1">Monomer and homodimer. Part of the essential Sec protein translocation apparatus which comprises SecA, SecYEG and auxiliary proteins SecDF. Other proteins may also be involved.</text>
</comment>
<comment type="subcellular location">
    <subcellularLocation>
        <location evidence="1">Cell membrane</location>
        <topology evidence="1">Peripheral membrane protein</topology>
        <orientation evidence="1">Cytoplasmic side</orientation>
    </subcellularLocation>
    <subcellularLocation>
        <location evidence="1">Cytoplasm</location>
    </subcellularLocation>
    <text evidence="1">Distribution is 50-50.</text>
</comment>
<comment type="similarity">
    <text evidence="1">Belongs to the SecA family.</text>
</comment>
<organism>
    <name type="scientific">Staphylococcus haemolyticus (strain JCSC1435)</name>
    <dbReference type="NCBI Taxonomy" id="279808"/>
    <lineage>
        <taxon>Bacteria</taxon>
        <taxon>Bacillati</taxon>
        <taxon>Bacillota</taxon>
        <taxon>Bacilli</taxon>
        <taxon>Bacillales</taxon>
        <taxon>Staphylococcaceae</taxon>
        <taxon>Staphylococcus</taxon>
    </lineage>
</organism>
<accession>Q4L9N5</accession>
<sequence length="796" mass="91461">MANQVSNVINSMRLKRLQKQLVAVNRLSDQMRNCSDEALQAKTADFKQRLEKRETTLDKLLPEAYATIREASKRVLGMYPKDVQVMGAIVMHQGNIAEMQTGEGKTLTATMPLYLNALTGKSAFLITTNDYLANRDFQEMRPLYEWLGLTASLGFVDIPDYEYAENEKQMLYNHDIIYTTNGRLGFDYLFDNLADHINAKYLPELNFAIIDEVDSIILDAAQTPLVISGAPRVQSNLFHIIKMFVETLVEDEHFKLNVNKKEVWLTDEGIDVANHYFKVNNIYLPQYFDLVRVINLSLRAKYLFKDNLDYFIYNGEVVLIDRITGRMLPGTKLQSGLHQAIEAKEGVELSQDLSVMATITFQNLFKLFNGFSGMTGTGKLGEKEFFDLYSKLVVEIPTNHPIIRNDKEDRVYAKSDEKNKAILEKVKEIHATKQPVLLITRTAEAAEYFSTQLFKDNIPNNLLIAQNVAKEAQMIAEAGQLGAVTVSTSMAGRGTDIKLGSGVYELGGLAVIINEHMENSRVDRQLRGRSGRQGDPGVSQIYVSLDDYIVKRWSNSKLAENKKLKDVDPDKLQDSPFFRRRVRGIVSKAQRVSEETSMMAREMANEFEKSIGIQRDRVYEERNRILETSDFSAFDFDSLARDVFDYDLRTKHIHNKDDIINYIYEQLSFSFKDDAISQQIQTREQTIDYLVQQFNKQLKENMKIANNDYFKLRFFQKAILKAIDVEWINQVDQLQQLKASVNNRQNGQRNAIFEYHKVALETYEMMLINIKRATIRNLCLSILTFDKDQDLVVHFP</sequence>